<name>GPA12_CAEBR</name>
<organism>
    <name type="scientific">Caenorhabditis briggsae</name>
    <dbReference type="NCBI Taxonomy" id="6238"/>
    <lineage>
        <taxon>Eukaryota</taxon>
        <taxon>Metazoa</taxon>
        <taxon>Ecdysozoa</taxon>
        <taxon>Nematoda</taxon>
        <taxon>Chromadorea</taxon>
        <taxon>Rhabditida</taxon>
        <taxon>Rhabditina</taxon>
        <taxon>Rhabditomorpha</taxon>
        <taxon>Rhabditoidea</taxon>
        <taxon>Rhabditidae</taxon>
        <taxon>Peloderinae</taxon>
        <taxon>Caenorhabditis</taxon>
    </lineage>
</organism>
<dbReference type="EMBL" id="AY634290">
    <property type="protein sequence ID" value="AAW02896.1"/>
    <property type="molecule type" value="Genomic_DNA"/>
</dbReference>
<dbReference type="EMBL" id="HE600961">
    <property type="protein sequence ID" value="CAP34219.3"/>
    <property type="molecule type" value="Genomic_DNA"/>
</dbReference>
<dbReference type="SMR" id="Q613V4"/>
<dbReference type="FunCoup" id="Q613V4">
    <property type="interactions" value="1539"/>
</dbReference>
<dbReference type="STRING" id="6238.Q613V4"/>
<dbReference type="KEGG" id="cbr:CBG_16182"/>
<dbReference type="CTD" id="8585502"/>
<dbReference type="WormBase" id="CBG16182">
    <property type="protein sequence ID" value="CBP45901"/>
    <property type="gene ID" value="WBGene00036208"/>
    <property type="gene designation" value="Cbr-gpa-12"/>
</dbReference>
<dbReference type="eggNOG" id="KOG0082">
    <property type="taxonomic scope" value="Eukaryota"/>
</dbReference>
<dbReference type="HOGENOM" id="CLU_014184_3_1_1"/>
<dbReference type="InParanoid" id="Q613V4"/>
<dbReference type="OMA" id="IMRRQIN"/>
<dbReference type="Proteomes" id="UP000008549">
    <property type="component" value="Unassembled WGS sequence"/>
</dbReference>
<dbReference type="GO" id="GO:0031526">
    <property type="term" value="C:brush border membrane"/>
    <property type="evidence" value="ECO:0000318"/>
    <property type="project" value="GO_Central"/>
</dbReference>
<dbReference type="GO" id="GO:0005737">
    <property type="term" value="C:cytoplasm"/>
    <property type="evidence" value="ECO:0000318"/>
    <property type="project" value="GO_Central"/>
</dbReference>
<dbReference type="GO" id="GO:0005834">
    <property type="term" value="C:heterotrimeric G-protein complex"/>
    <property type="evidence" value="ECO:0000318"/>
    <property type="project" value="GO_Central"/>
</dbReference>
<dbReference type="GO" id="GO:0031752">
    <property type="term" value="F:D5 dopamine receptor binding"/>
    <property type="evidence" value="ECO:0000318"/>
    <property type="project" value="GO_Central"/>
</dbReference>
<dbReference type="GO" id="GO:0031683">
    <property type="term" value="F:G-protein beta/gamma-subunit complex binding"/>
    <property type="evidence" value="ECO:0000318"/>
    <property type="project" value="GO_Central"/>
</dbReference>
<dbReference type="GO" id="GO:0005525">
    <property type="term" value="F:GTP binding"/>
    <property type="evidence" value="ECO:0007669"/>
    <property type="project" value="UniProtKB-KW"/>
</dbReference>
<dbReference type="GO" id="GO:0003924">
    <property type="term" value="F:GTPase activity"/>
    <property type="evidence" value="ECO:0000318"/>
    <property type="project" value="GO_Central"/>
</dbReference>
<dbReference type="GO" id="GO:0046872">
    <property type="term" value="F:metal ion binding"/>
    <property type="evidence" value="ECO:0007669"/>
    <property type="project" value="UniProtKB-KW"/>
</dbReference>
<dbReference type="GO" id="GO:0007188">
    <property type="term" value="P:adenylate cyclase-modulating G protein-coupled receptor signaling pathway"/>
    <property type="evidence" value="ECO:0000318"/>
    <property type="project" value="GO_Central"/>
</dbReference>
<dbReference type="GO" id="GO:0007266">
    <property type="term" value="P:Rho protein signal transduction"/>
    <property type="evidence" value="ECO:0000318"/>
    <property type="project" value="GO_Central"/>
</dbReference>
<dbReference type="CDD" id="cd00066">
    <property type="entry name" value="G-alpha"/>
    <property type="match status" value="1"/>
</dbReference>
<dbReference type="FunFam" id="1.10.400.10:FF:000018">
    <property type="entry name" value="Guanine nucleotide-binding protein alpha-12 subunit"/>
    <property type="match status" value="1"/>
</dbReference>
<dbReference type="FunFam" id="3.40.50.300:FF:000754">
    <property type="entry name" value="Guanine nucleotide-binding protein subunit alpha-13"/>
    <property type="match status" value="1"/>
</dbReference>
<dbReference type="Gene3D" id="1.10.400.10">
    <property type="entry name" value="GI Alpha 1, domain 2-like"/>
    <property type="match status" value="1"/>
</dbReference>
<dbReference type="Gene3D" id="3.40.50.300">
    <property type="entry name" value="P-loop containing nucleotide triphosphate hydrolases"/>
    <property type="match status" value="1"/>
</dbReference>
<dbReference type="InterPro" id="IPR000469">
    <property type="entry name" value="Gprotein_alpha_12/13"/>
</dbReference>
<dbReference type="InterPro" id="IPR001019">
    <property type="entry name" value="Gprotein_alpha_su"/>
</dbReference>
<dbReference type="InterPro" id="IPR011025">
    <property type="entry name" value="GproteinA_insert"/>
</dbReference>
<dbReference type="InterPro" id="IPR027417">
    <property type="entry name" value="P-loop_NTPase"/>
</dbReference>
<dbReference type="PANTHER" id="PTHR10218">
    <property type="entry name" value="GTP-BINDING PROTEIN ALPHA SUBUNIT"/>
    <property type="match status" value="1"/>
</dbReference>
<dbReference type="PANTHER" id="PTHR10218:SF360">
    <property type="entry name" value="GUANINE NUCLEOTIDE-BINDING PROTEIN SUBUNIT ALPHA HOMOLOG"/>
    <property type="match status" value="1"/>
</dbReference>
<dbReference type="Pfam" id="PF00503">
    <property type="entry name" value="G-alpha"/>
    <property type="match status" value="1"/>
</dbReference>
<dbReference type="PRINTS" id="PR00318">
    <property type="entry name" value="GPROTEINA"/>
</dbReference>
<dbReference type="PRINTS" id="PR00440">
    <property type="entry name" value="GPROTEINA12"/>
</dbReference>
<dbReference type="SMART" id="SM00275">
    <property type="entry name" value="G_alpha"/>
    <property type="match status" value="1"/>
</dbReference>
<dbReference type="SUPFAM" id="SSF52540">
    <property type="entry name" value="P-loop containing nucleoside triphosphate hydrolases"/>
    <property type="match status" value="1"/>
</dbReference>
<dbReference type="SUPFAM" id="SSF47895">
    <property type="entry name" value="Transducin (alpha subunit), insertion domain"/>
    <property type="match status" value="1"/>
</dbReference>
<dbReference type="PROSITE" id="PS51882">
    <property type="entry name" value="G_ALPHA"/>
    <property type="match status" value="1"/>
</dbReference>
<comment type="function">
    <text evidence="2">Guanine nucleotide-binding proteins (G proteins) are involved as modulators or transducers in various transmembrane signaling systems. May play a role in resistance to fungal infection in the epidermis by regulating the up-regulation of several antimicrobial peptides of the NLP and CNC families. Upstream of plc-3, egl-8, tpa-1 and the p38-like pathway, required for the expression of antimicrobial peptide nlp-29 in the epidermis in response to fungal infection or physical injury.</text>
</comment>
<comment type="subunit">
    <text>G proteins are composed of 3 units; alpha, beta and gamma. The alpha chain contains the guanine nucleotide binding site.</text>
</comment>
<comment type="similarity">
    <text evidence="4">Belongs to the G-alpha family.</text>
</comment>
<evidence type="ECO:0000250" key="1"/>
<evidence type="ECO:0000250" key="2">
    <source>
        <dbReference type="UniProtKB" id="Q19572"/>
    </source>
</evidence>
<evidence type="ECO:0000255" key="3">
    <source>
        <dbReference type="PROSITE-ProRule" id="PRU01230"/>
    </source>
</evidence>
<evidence type="ECO:0000305" key="4"/>
<sequence length="355" mass="42004">MVCCFGKKDERTKTIEKELHKERKIMRRQINLLLLGSGESGKSTFVKQMHIIHGAGEFTADEVRAYRQQIYQNAISAMRVLLDARNKLGIAWEDPKRQVEVEKVMRFTVGDLLKGIDFTTFVEVAPIISDFWNDAAIRKTYEQRNLFQISDSCQYFFEHIPRIAMPDFYPTNRDILFCRKATRGISEHIFEINKIPFRFIDVGGQRSQRQKWFQCFTDITSILFMVASNEYDQVILEDRRTNRVVESRSVFETIVNNRSFSNVSIILFMNKNDLLQEKVPKSDIRQYFTDFTGDHTLVRDVQFFLVDKFEASRRDRARPFFYHFTTAVDTENIRRVFRDVRESILEQNLKTLMMQ</sequence>
<feature type="chain" id="PRO_0000203648" description="Guanine nucleotide-binding protein alpha-12 subunit">
    <location>
        <begin position="1"/>
        <end position="355"/>
    </location>
</feature>
<feature type="domain" description="G-alpha" evidence="3">
    <location>
        <begin position="28"/>
        <end position="355"/>
    </location>
</feature>
<feature type="region of interest" description="G1 motif" evidence="3">
    <location>
        <begin position="31"/>
        <end position="44"/>
    </location>
</feature>
<feature type="region of interest" description="G2 motif" evidence="3">
    <location>
        <begin position="174"/>
        <end position="182"/>
    </location>
</feature>
<feature type="region of interest" description="G3 motif" evidence="3">
    <location>
        <begin position="197"/>
        <end position="206"/>
    </location>
</feature>
<feature type="region of interest" description="G4 motif" evidence="3">
    <location>
        <begin position="266"/>
        <end position="273"/>
    </location>
</feature>
<feature type="region of interest" description="G5 motif" evidence="3">
    <location>
        <begin position="325"/>
        <end position="330"/>
    </location>
</feature>
<feature type="binding site" evidence="1">
    <location>
        <begin position="36"/>
        <end position="43"/>
    </location>
    <ligand>
        <name>GTP</name>
        <dbReference type="ChEBI" id="CHEBI:37565"/>
    </ligand>
</feature>
<feature type="binding site" evidence="1">
    <location>
        <position position="43"/>
    </location>
    <ligand>
        <name>Mg(2+)</name>
        <dbReference type="ChEBI" id="CHEBI:18420"/>
    </ligand>
</feature>
<feature type="binding site" evidence="1">
    <location>
        <begin position="176"/>
        <end position="182"/>
    </location>
    <ligand>
        <name>GTP</name>
        <dbReference type="ChEBI" id="CHEBI:37565"/>
    </ligand>
</feature>
<feature type="binding site" evidence="1">
    <location>
        <position position="182"/>
    </location>
    <ligand>
        <name>Mg(2+)</name>
        <dbReference type="ChEBI" id="CHEBI:18420"/>
    </ligand>
</feature>
<feature type="binding site" evidence="1">
    <location>
        <begin position="201"/>
        <end position="205"/>
    </location>
    <ligand>
        <name>GTP</name>
        <dbReference type="ChEBI" id="CHEBI:37565"/>
    </ligand>
</feature>
<feature type="binding site" evidence="1">
    <location>
        <begin position="270"/>
        <end position="273"/>
    </location>
    <ligand>
        <name>GTP</name>
        <dbReference type="ChEBI" id="CHEBI:37565"/>
    </ligand>
</feature>
<feature type="binding site" evidence="1">
    <location>
        <position position="327"/>
    </location>
    <ligand>
        <name>GTP</name>
        <dbReference type="ChEBI" id="CHEBI:37565"/>
    </ligand>
</feature>
<proteinExistence type="inferred from homology"/>
<keyword id="KW-0342">GTP-binding</keyword>
<keyword id="KW-0460">Magnesium</keyword>
<keyword id="KW-0479">Metal-binding</keyword>
<keyword id="KW-0547">Nucleotide-binding</keyword>
<keyword id="KW-1185">Reference proteome</keyword>
<keyword id="KW-0807">Transducer</keyword>
<protein>
    <recommendedName>
        <fullName>Guanine nucleotide-binding protein alpha-12 subunit</fullName>
    </recommendedName>
</protein>
<accession>Q613V4</accession>
<accession>A8XNX9</accession>
<gene>
    <name type="primary">gpa-12</name>
    <name type="ORF">CBG16182</name>
</gene>
<reference key="1">
    <citation type="journal article" date="2005" name="Mol. Genet. Genomics">
        <title>Functional constraint and divergence in the G protein family in Caenorhabditis elegans and Caenorhabditis briggsae.</title>
        <authorList>
            <person name="Jovelin R."/>
            <person name="Phillips P.C."/>
        </authorList>
    </citation>
    <scope>NUCLEOTIDE SEQUENCE [GENOMIC DNA]</scope>
    <source>
        <strain>AF16</strain>
    </source>
</reference>
<reference key="2">
    <citation type="journal article" date="2003" name="PLoS Biol.">
        <title>The genome sequence of Caenorhabditis briggsae: a platform for comparative genomics.</title>
        <authorList>
            <person name="Stein L.D."/>
            <person name="Bao Z."/>
            <person name="Blasiar D."/>
            <person name="Blumenthal T."/>
            <person name="Brent M.R."/>
            <person name="Chen N."/>
            <person name="Chinwalla A."/>
            <person name="Clarke L."/>
            <person name="Clee C."/>
            <person name="Coghlan A."/>
            <person name="Coulson A."/>
            <person name="D'Eustachio P."/>
            <person name="Fitch D.H.A."/>
            <person name="Fulton L.A."/>
            <person name="Fulton R.E."/>
            <person name="Griffiths-Jones S."/>
            <person name="Harris T.W."/>
            <person name="Hillier L.W."/>
            <person name="Kamath R."/>
            <person name="Kuwabara P.E."/>
            <person name="Mardis E.R."/>
            <person name="Marra M.A."/>
            <person name="Miner T.L."/>
            <person name="Minx P."/>
            <person name="Mullikin J.C."/>
            <person name="Plumb R.W."/>
            <person name="Rogers J."/>
            <person name="Schein J.E."/>
            <person name="Sohrmann M."/>
            <person name="Spieth J."/>
            <person name="Stajich J.E."/>
            <person name="Wei C."/>
            <person name="Willey D."/>
            <person name="Wilson R.K."/>
            <person name="Durbin R.M."/>
            <person name="Waterston R.H."/>
        </authorList>
    </citation>
    <scope>NUCLEOTIDE SEQUENCE [LARGE SCALE GENOMIC DNA]</scope>
    <source>
        <strain>AF16</strain>
    </source>
</reference>